<name>HAND2_HUMAN</name>
<comment type="function">
    <text evidence="1">Essential for cardiac morphogenesis, particularly for the formation of the right ventricle and of the aortic arch arteries. Required for vascular development and regulation of angiogenesis, possibly through a VEGF signaling pathway. Also plays an important role in limb development, particularly in the establishment of anterior-posterior polarization, acting as an upstream regulator of sonic hedgehog (SHH) induction in the limb bud. Is involved in the development of branchial arches, which give rise to unique structures in the head and neck. Binds DNA on E-box consensus sequence 5'-CANNTG-3' (By similarity).</text>
</comment>
<comment type="subunit">
    <text evidence="1">Efficient DNA binding requires dimerization with another bHLH protein. Forms homodimers and heterodimers with TCF3 gene products E12 and E47, HAND1 and HEY1, HEY2 and HEYL (hairy-related transcription factors) (By similarity).</text>
</comment>
<comment type="interaction">
    <interactant intactId="EBI-10218584">
        <id>P61296</id>
    </interactant>
    <interactant intactId="EBI-533224">
        <id>P15884</id>
        <label>TCF4</label>
    </interactant>
    <organismsDiffer>false</organismsDiffer>
    <experiments>4</experiments>
</comment>
<comment type="interaction">
    <interactant intactId="EBI-13086076">
        <id>P61296-2</id>
    </interactant>
    <interactant intactId="EBI-6658203">
        <id>Q86YD7</id>
        <label>FAM90A1</label>
    </interactant>
    <organismsDiffer>false</organismsDiffer>
    <experiments>3</experiments>
</comment>
<comment type="interaction">
    <interactant intactId="EBI-13086076">
        <id>P61296-2</id>
    </interactant>
    <interactant intactId="EBI-2556193">
        <id>Q63ZY3</id>
        <label>KANK2</label>
    </interactant>
    <organismsDiffer>false</organismsDiffer>
    <experiments>3</experiments>
</comment>
<comment type="interaction">
    <interactant intactId="EBI-13086076">
        <id>P61296-2</id>
    </interactant>
    <interactant intactId="EBI-748974">
        <id>Q96CV9</id>
        <label>OPTN</label>
    </interactant>
    <organismsDiffer>false</organismsDiffer>
    <experiments>3</experiments>
</comment>
<comment type="interaction">
    <interactant intactId="EBI-13086076">
        <id>P61296-2</id>
    </interactant>
    <interactant intactId="EBI-10226430">
        <id>Q0D2K3</id>
        <label>RIPPLY1</label>
    </interactant>
    <organismsDiffer>false</organismsDiffer>
    <experiments>3</experiments>
</comment>
<comment type="interaction">
    <interactant intactId="EBI-13086076">
        <id>P61296-2</id>
    </interactant>
    <interactant intactId="EBI-12037215">
        <id>Q5MJ09</id>
        <label>SPANXN3</label>
    </interactant>
    <organismsDiffer>false</organismsDiffer>
    <experiments>3</experiments>
</comment>
<comment type="interaction">
    <interactant intactId="EBI-13086076">
        <id>P61296-2</id>
    </interactant>
    <interactant intactId="EBI-11952764">
        <id>Q99081-3</id>
        <label>TCF12</label>
    </interactant>
    <organismsDiffer>false</organismsDiffer>
    <experiments>3</experiments>
</comment>
<comment type="interaction">
    <interactant intactId="EBI-13086076">
        <id>P61296-2</id>
    </interactant>
    <interactant intactId="EBI-2511991">
        <id>Q9Y2K6</id>
        <label>USP20</label>
    </interactant>
    <organismsDiffer>false</organismsDiffer>
    <experiments>3</experiments>
</comment>
<comment type="subcellular location">
    <subcellularLocation>
        <location evidence="2">Nucleus</location>
    </subcellularLocation>
</comment>
<comment type="alternative products">
    <event type="alternative splicing"/>
    <isoform>
        <id>P61296-1</id>
        <name>1</name>
        <sequence type="displayed"/>
    </isoform>
    <isoform>
        <id>P61296-2</id>
        <name>2</name>
        <sequence type="described" ref="VSP_056880 VSP_056881"/>
    </isoform>
</comment>
<comment type="tissue specificity">
    <text>Heart.</text>
</comment>
<comment type="developmental stage">
    <text>Expressed in the fetal heart.</text>
</comment>
<proteinExistence type="evidence at protein level"/>
<keyword id="KW-0025">Alternative splicing</keyword>
<keyword id="KW-0037">Angiogenesis</keyword>
<keyword id="KW-0217">Developmental protein</keyword>
<keyword id="KW-0221">Differentiation</keyword>
<keyword id="KW-0238">DNA-binding</keyword>
<keyword id="KW-0539">Nucleus</keyword>
<keyword id="KW-1267">Proteomics identification</keyword>
<keyword id="KW-1185">Reference proteome</keyword>
<keyword id="KW-0804">Transcription</keyword>
<keyword id="KW-0805">Transcription regulation</keyword>
<sequence>MSLVGGFPHHPVVHHEGYPFAAAAAAAAAAAASRCSHEENPYFHGWLIGHPEMSPPDYSMALSYSPEYASGAAGLDHSHYGGVPPGAGPPGLGGPRPVKRRGTANRKERRRTQSINSAFAELRECIPNVPADTKLSKIKTLRLATSYIAYLMDLLAKDDQNGEAEAFKAEIKKTDVKEEKRKKELNEILKSTVSSNDKKTKGRTGWPQHVWALELKQ</sequence>
<gene>
    <name type="primary">HAND2</name>
    <name type="synonym">BHLHA26</name>
    <name type="synonym">DHAND</name>
</gene>
<organism>
    <name type="scientific">Homo sapiens</name>
    <name type="common">Human</name>
    <dbReference type="NCBI Taxonomy" id="9606"/>
    <lineage>
        <taxon>Eukaryota</taxon>
        <taxon>Metazoa</taxon>
        <taxon>Chordata</taxon>
        <taxon>Craniata</taxon>
        <taxon>Vertebrata</taxon>
        <taxon>Euteleostomi</taxon>
        <taxon>Mammalia</taxon>
        <taxon>Eutheria</taxon>
        <taxon>Euarchontoglires</taxon>
        <taxon>Primates</taxon>
        <taxon>Haplorrhini</taxon>
        <taxon>Catarrhini</taxon>
        <taxon>Hominidae</taxon>
        <taxon>Homo</taxon>
    </lineage>
</organism>
<reference key="1">
    <citation type="journal article" date="1998" name="Biochim. Biophys. Acta">
        <title>Molecular cloning of the human HAND2 gene.</title>
        <authorList>
            <person name="Russell M.W."/>
            <person name="Kemp P."/>
            <person name="Wang L."/>
            <person name="Brody L.C."/>
            <person name="Izumo S."/>
        </authorList>
    </citation>
    <scope>NUCLEOTIDE SEQUENCE [GENOMIC DNA / MRNA] (ISOFORM 1)</scope>
    <source>
        <tissue>Embryonic heart</tissue>
    </source>
</reference>
<reference key="2">
    <citation type="journal article" date="2009" name="BMC Mol. Biol.">
        <title>Co-regulated expression of HAND2 and DEIN by a bidirectional promoter with asymmetrical activity in neuroblastoma.</title>
        <authorList>
            <person name="Voth H."/>
            <person name="Oberthuer A."/>
            <person name="Simon T."/>
            <person name="Kahlert Y."/>
            <person name="Berthold F."/>
            <person name="Fischer M."/>
        </authorList>
    </citation>
    <scope>NUCLEOTIDE SEQUENCE [MRNA] (ISOFORM 1)</scope>
    <source>
        <tissue>Neuroblastoma</tissue>
    </source>
</reference>
<reference key="3">
    <citation type="submission" date="2005-09" db="EMBL/GenBank/DDBJ databases">
        <authorList>
            <person name="Mural R.J."/>
            <person name="Istrail S."/>
            <person name="Sutton G."/>
            <person name="Florea L."/>
            <person name="Halpern A.L."/>
            <person name="Mobarry C.M."/>
            <person name="Lippert R."/>
            <person name="Walenz B."/>
            <person name="Shatkay H."/>
            <person name="Dew I."/>
            <person name="Miller J.R."/>
            <person name="Flanigan M.J."/>
            <person name="Edwards N.J."/>
            <person name="Bolanos R."/>
            <person name="Fasulo D."/>
            <person name="Halldorsson B.V."/>
            <person name="Hannenhalli S."/>
            <person name="Turner R."/>
            <person name="Yooseph S."/>
            <person name="Lu F."/>
            <person name="Nusskern D.R."/>
            <person name="Shue B.C."/>
            <person name="Zheng X.H."/>
            <person name="Zhong F."/>
            <person name="Delcher A.L."/>
            <person name="Huson D.H."/>
            <person name="Kravitz S.A."/>
            <person name="Mouchard L."/>
            <person name="Reinert K."/>
            <person name="Remington K.A."/>
            <person name="Clark A.G."/>
            <person name="Waterman M.S."/>
            <person name="Eichler E.E."/>
            <person name="Adams M.D."/>
            <person name="Hunkapiller M.W."/>
            <person name="Myers E.W."/>
            <person name="Venter J.C."/>
        </authorList>
    </citation>
    <scope>NUCLEOTIDE SEQUENCE [LARGE SCALE GENOMIC DNA]</scope>
</reference>
<reference key="4">
    <citation type="journal article" date="2004" name="Genome Res.">
        <title>The status, quality, and expansion of the NIH full-length cDNA project: the Mammalian Gene Collection (MGC).</title>
        <authorList>
            <consortium name="The MGC Project Team"/>
        </authorList>
    </citation>
    <scope>NUCLEOTIDE SEQUENCE [LARGE SCALE MRNA] (ISOFORM 2)</scope>
</reference>
<evidence type="ECO:0000250" key="1"/>
<evidence type="ECO:0000255" key="2">
    <source>
        <dbReference type="PROSITE-ProRule" id="PRU00981"/>
    </source>
</evidence>
<evidence type="ECO:0000256" key="3">
    <source>
        <dbReference type="SAM" id="MobiDB-lite"/>
    </source>
</evidence>
<evidence type="ECO:0000303" key="4">
    <source>
    </source>
</evidence>
<dbReference type="EMBL" id="AF087940">
    <property type="protein sequence ID" value="AAD13185.1"/>
    <property type="molecule type" value="mRNA"/>
</dbReference>
<dbReference type="EMBL" id="AF087941">
    <property type="protein sequence ID" value="AAD13186.1"/>
    <property type="molecule type" value="Genomic_DNA"/>
</dbReference>
<dbReference type="EMBL" id="FJ226608">
    <property type="protein sequence ID" value="ACI42790.1"/>
    <property type="molecule type" value="mRNA"/>
</dbReference>
<dbReference type="EMBL" id="CH471056">
    <property type="protein sequence ID" value="EAX04749.1"/>
    <property type="molecule type" value="Genomic_DNA"/>
</dbReference>
<dbReference type="EMBL" id="BC101406">
    <property type="protein sequence ID" value="AAI01407.1"/>
    <property type="molecule type" value="mRNA"/>
</dbReference>
<dbReference type="CCDS" id="CCDS3819.1">
    <molecule id="P61296-1"/>
</dbReference>
<dbReference type="RefSeq" id="NP_068808.1">
    <molecule id="P61296-1"/>
    <property type="nucleotide sequence ID" value="NM_021973.3"/>
</dbReference>
<dbReference type="SMR" id="P61296"/>
<dbReference type="BioGRID" id="114850">
    <property type="interactions" value="32"/>
</dbReference>
<dbReference type="FunCoup" id="P61296">
    <property type="interactions" value="202"/>
</dbReference>
<dbReference type="IntAct" id="P61296">
    <property type="interactions" value="10"/>
</dbReference>
<dbReference type="STRING" id="9606.ENSP00000352565"/>
<dbReference type="iPTMnet" id="P61296"/>
<dbReference type="PhosphoSitePlus" id="P61296"/>
<dbReference type="BioMuta" id="HAND2"/>
<dbReference type="DMDM" id="47117699"/>
<dbReference type="jPOST" id="P61296"/>
<dbReference type="MassIVE" id="P61296"/>
<dbReference type="PaxDb" id="9606-ENSP00000352565"/>
<dbReference type="PeptideAtlas" id="P61296"/>
<dbReference type="ProteomicsDB" id="57292">
    <molecule id="P61296-1"/>
</dbReference>
<dbReference type="Antibodypedia" id="28534">
    <property type="antibodies" value="295 antibodies from 30 providers"/>
</dbReference>
<dbReference type="DNASU" id="9464"/>
<dbReference type="Ensembl" id="ENST00000359562.4">
    <molecule id="P61296-1"/>
    <property type="protein sequence ID" value="ENSP00000352565.4"/>
    <property type="gene ID" value="ENSG00000164107.9"/>
</dbReference>
<dbReference type="GeneID" id="9464"/>
<dbReference type="KEGG" id="hsa:9464"/>
<dbReference type="MANE-Select" id="ENST00000359562.4">
    <property type="protein sequence ID" value="ENSP00000352565.4"/>
    <property type="RefSeq nucleotide sequence ID" value="NM_021973.3"/>
    <property type="RefSeq protein sequence ID" value="NP_068808.1"/>
</dbReference>
<dbReference type="UCSC" id="uc003ith.2">
    <molecule id="P61296-1"/>
    <property type="organism name" value="human"/>
</dbReference>
<dbReference type="AGR" id="HGNC:4808"/>
<dbReference type="CTD" id="9464"/>
<dbReference type="DisGeNET" id="9464"/>
<dbReference type="GeneCards" id="HAND2"/>
<dbReference type="HGNC" id="HGNC:4808">
    <property type="gene designation" value="HAND2"/>
</dbReference>
<dbReference type="HPA" id="ENSG00000164107">
    <property type="expression patterns" value="Tissue enhanced (intestine)"/>
</dbReference>
<dbReference type="MalaCards" id="HAND2"/>
<dbReference type="MIM" id="602407">
    <property type="type" value="gene"/>
</dbReference>
<dbReference type="neXtProt" id="NX_P61296"/>
<dbReference type="OpenTargets" id="ENSG00000164107"/>
<dbReference type="Orphanet" id="154">
    <property type="disease" value="Familial isolated dilated cardiomyopathy"/>
</dbReference>
<dbReference type="PharmGKB" id="PA29184"/>
<dbReference type="VEuPathDB" id="HostDB:ENSG00000164107"/>
<dbReference type="eggNOG" id="KOG4029">
    <property type="taxonomic scope" value="Eukaryota"/>
</dbReference>
<dbReference type="GeneTree" id="ENSGT00940000160772"/>
<dbReference type="InParanoid" id="P61296"/>
<dbReference type="OMA" id="PDYGMAL"/>
<dbReference type="OrthoDB" id="10055449at2759"/>
<dbReference type="PAN-GO" id="P61296">
    <property type="GO annotations" value="4 GO annotations based on evolutionary models"/>
</dbReference>
<dbReference type="PhylomeDB" id="P61296"/>
<dbReference type="TreeFam" id="TF315153"/>
<dbReference type="PathwayCommons" id="P61296"/>
<dbReference type="Reactome" id="R-HSA-8878166">
    <property type="pathway name" value="Transcriptional regulation by RUNX2"/>
</dbReference>
<dbReference type="Reactome" id="R-HSA-9733709">
    <property type="pathway name" value="Cardiogenesis"/>
</dbReference>
<dbReference type="SignaLink" id="P61296"/>
<dbReference type="SIGNOR" id="P61296"/>
<dbReference type="BioGRID-ORCS" id="9464">
    <property type="hits" value="14 hits in 1174 CRISPR screens"/>
</dbReference>
<dbReference type="ChiTaRS" id="HAND2">
    <property type="organism name" value="human"/>
</dbReference>
<dbReference type="GeneWiki" id="HAND2"/>
<dbReference type="GenomeRNAi" id="9464"/>
<dbReference type="Pharos" id="P61296">
    <property type="development level" value="Tbio"/>
</dbReference>
<dbReference type="PRO" id="PR:P61296"/>
<dbReference type="Proteomes" id="UP000005640">
    <property type="component" value="Chromosome 4"/>
</dbReference>
<dbReference type="RNAct" id="P61296">
    <property type="molecule type" value="protein"/>
</dbReference>
<dbReference type="Bgee" id="ENSG00000164107">
    <property type="expression patterns" value="Expressed in muscle layer of sigmoid colon and 97 other cell types or tissues"/>
</dbReference>
<dbReference type="ExpressionAtlas" id="P61296">
    <property type="expression patterns" value="baseline and differential"/>
</dbReference>
<dbReference type="GO" id="GO:0000785">
    <property type="term" value="C:chromatin"/>
    <property type="evidence" value="ECO:0000314"/>
    <property type="project" value="BHF-UCL"/>
</dbReference>
<dbReference type="GO" id="GO:0005634">
    <property type="term" value="C:nucleus"/>
    <property type="evidence" value="ECO:0007669"/>
    <property type="project" value="UniProtKB-SubCell"/>
</dbReference>
<dbReference type="GO" id="GO:0032991">
    <property type="term" value="C:protein-containing complex"/>
    <property type="evidence" value="ECO:0000314"/>
    <property type="project" value="UniProtKB"/>
</dbReference>
<dbReference type="GO" id="GO:0005667">
    <property type="term" value="C:transcription regulator complex"/>
    <property type="evidence" value="ECO:0000250"/>
    <property type="project" value="BHF-UCL"/>
</dbReference>
<dbReference type="GO" id="GO:0001228">
    <property type="term" value="F:DNA-binding transcription activator activity, RNA polymerase II-specific"/>
    <property type="evidence" value="ECO:0000314"/>
    <property type="project" value="UniProtKB"/>
</dbReference>
<dbReference type="GO" id="GO:0000981">
    <property type="term" value="F:DNA-binding transcription factor activity, RNA polymerase II-specific"/>
    <property type="evidence" value="ECO:0000250"/>
    <property type="project" value="BHF-UCL"/>
</dbReference>
<dbReference type="GO" id="GO:0070888">
    <property type="term" value="F:E-box binding"/>
    <property type="evidence" value="ECO:0000314"/>
    <property type="project" value="UniProtKB"/>
</dbReference>
<dbReference type="GO" id="GO:0003680">
    <property type="term" value="F:minor groove of adenine-thymine-rich DNA binding"/>
    <property type="evidence" value="ECO:0000314"/>
    <property type="project" value="UniProtKB"/>
</dbReference>
<dbReference type="GO" id="GO:0042803">
    <property type="term" value="F:protein homodimerization activity"/>
    <property type="evidence" value="ECO:0000250"/>
    <property type="project" value="BHF-UCL"/>
</dbReference>
<dbReference type="GO" id="GO:0000977">
    <property type="term" value="F:RNA polymerase II transcription regulatory region sequence-specific DNA binding"/>
    <property type="evidence" value="ECO:0000314"/>
    <property type="project" value="BHF-UCL"/>
</dbReference>
<dbReference type="GO" id="GO:0061629">
    <property type="term" value="F:RNA polymerase II-specific DNA-binding transcription factor binding"/>
    <property type="evidence" value="ECO:0000250"/>
    <property type="project" value="BHF-UCL"/>
</dbReference>
<dbReference type="GO" id="GO:1990837">
    <property type="term" value="F:sequence-specific double-stranded DNA binding"/>
    <property type="evidence" value="ECO:0000314"/>
    <property type="project" value="ARUK-UCL"/>
</dbReference>
<dbReference type="GO" id="GO:0001223">
    <property type="term" value="F:transcription coactivator binding"/>
    <property type="evidence" value="ECO:0000250"/>
    <property type="project" value="BHF-UCL"/>
</dbReference>
<dbReference type="GO" id="GO:0007512">
    <property type="term" value="P:adult heart development"/>
    <property type="evidence" value="ECO:0000270"/>
    <property type="project" value="BHF-UCL"/>
</dbReference>
<dbReference type="GO" id="GO:0001525">
    <property type="term" value="P:angiogenesis"/>
    <property type="evidence" value="ECO:0007669"/>
    <property type="project" value="UniProtKB-KW"/>
</dbReference>
<dbReference type="GO" id="GO:0003278">
    <property type="term" value="P:apoptotic process involved in heart morphogenesis"/>
    <property type="evidence" value="ECO:0007669"/>
    <property type="project" value="Ensembl"/>
</dbReference>
<dbReference type="GO" id="GO:0061309">
    <property type="term" value="P:cardiac neural crest cell development involved in outflow tract morphogenesis"/>
    <property type="evidence" value="ECO:0000250"/>
    <property type="project" value="BHF-UCL"/>
</dbReference>
<dbReference type="GO" id="GO:0003253">
    <property type="term" value="P:cardiac neural crest cell migration involved in outflow tract morphogenesis"/>
    <property type="evidence" value="ECO:0007669"/>
    <property type="project" value="Ensembl"/>
</dbReference>
<dbReference type="GO" id="GO:0003219">
    <property type="term" value="P:cardiac right ventricle formation"/>
    <property type="evidence" value="ECO:0007669"/>
    <property type="project" value="Ensembl"/>
</dbReference>
<dbReference type="GO" id="GO:0060536">
    <property type="term" value="P:cartilage morphogenesis"/>
    <property type="evidence" value="ECO:0007669"/>
    <property type="project" value="Ensembl"/>
</dbReference>
<dbReference type="GO" id="GO:0061325">
    <property type="term" value="P:cell proliferation involved in outflow tract morphogenesis"/>
    <property type="evidence" value="ECO:0007669"/>
    <property type="project" value="Ensembl"/>
</dbReference>
<dbReference type="GO" id="GO:0071300">
    <property type="term" value="P:cellular response to retinoic acid"/>
    <property type="evidence" value="ECO:0007669"/>
    <property type="project" value="Ensembl"/>
</dbReference>
<dbReference type="GO" id="GO:0060982">
    <property type="term" value="P:coronary artery morphogenesis"/>
    <property type="evidence" value="ECO:0007669"/>
    <property type="project" value="Ensembl"/>
</dbReference>
<dbReference type="GO" id="GO:0042733">
    <property type="term" value="P:embryonic digit morphogenesis"/>
    <property type="evidence" value="ECO:0007669"/>
    <property type="project" value="Ensembl"/>
</dbReference>
<dbReference type="GO" id="GO:0048706">
    <property type="term" value="P:embryonic skeletal system development"/>
    <property type="evidence" value="ECO:0007669"/>
    <property type="project" value="Ensembl"/>
</dbReference>
<dbReference type="GO" id="GO:1904019">
    <property type="term" value="P:epithelial cell apoptotic process"/>
    <property type="evidence" value="ECO:0007669"/>
    <property type="project" value="Ensembl"/>
</dbReference>
<dbReference type="GO" id="GO:0007507">
    <property type="term" value="P:heart development"/>
    <property type="evidence" value="ECO:0000318"/>
    <property type="project" value="GO_Central"/>
</dbReference>
<dbReference type="GO" id="GO:0001947">
    <property type="term" value="P:heart looping"/>
    <property type="evidence" value="ECO:0007669"/>
    <property type="project" value="Ensembl"/>
</dbReference>
<dbReference type="GO" id="GO:0001701">
    <property type="term" value="P:in utero embryonic development"/>
    <property type="evidence" value="ECO:0007669"/>
    <property type="project" value="Ensembl"/>
</dbReference>
<dbReference type="GO" id="GO:0010463">
    <property type="term" value="P:mesenchymal cell proliferation"/>
    <property type="evidence" value="ECO:0007669"/>
    <property type="project" value="Ensembl"/>
</dbReference>
<dbReference type="GO" id="GO:0010667">
    <property type="term" value="P:negative regulation of cardiac muscle cell apoptotic process"/>
    <property type="evidence" value="ECO:0000250"/>
    <property type="project" value="BHF-UCL"/>
</dbReference>
<dbReference type="GO" id="GO:1904036">
    <property type="term" value="P:negative regulation of epithelial cell apoptotic process"/>
    <property type="evidence" value="ECO:0007669"/>
    <property type="project" value="Ensembl"/>
</dbReference>
<dbReference type="GO" id="GO:0010629">
    <property type="term" value="P:negative regulation of gene expression"/>
    <property type="evidence" value="ECO:0000315"/>
    <property type="project" value="BHF-UCL"/>
</dbReference>
<dbReference type="GO" id="GO:0045668">
    <property type="term" value="P:negative regulation of osteoblast differentiation"/>
    <property type="evidence" value="ECO:0007669"/>
    <property type="project" value="Ensembl"/>
</dbReference>
<dbReference type="GO" id="GO:0003357">
    <property type="term" value="P:noradrenergic neuron differentiation"/>
    <property type="evidence" value="ECO:0000303"/>
    <property type="project" value="BHF-UCL"/>
</dbReference>
<dbReference type="GO" id="GO:0042421">
    <property type="term" value="P:norepinephrine biosynthetic process"/>
    <property type="evidence" value="ECO:0007669"/>
    <property type="project" value="Ensembl"/>
</dbReference>
<dbReference type="GO" id="GO:0042475">
    <property type="term" value="P:odontogenesis of dentin-containing tooth"/>
    <property type="evidence" value="ECO:0007669"/>
    <property type="project" value="Ensembl"/>
</dbReference>
<dbReference type="GO" id="GO:0001649">
    <property type="term" value="P:osteoblast differentiation"/>
    <property type="evidence" value="ECO:0007669"/>
    <property type="project" value="Ensembl"/>
</dbReference>
<dbReference type="GO" id="GO:0003151">
    <property type="term" value="P:outflow tract morphogenesis"/>
    <property type="evidence" value="ECO:0000250"/>
    <property type="project" value="BHF-UCL"/>
</dbReference>
<dbReference type="GO" id="GO:0048935">
    <property type="term" value="P:peripheral nervous system neuron development"/>
    <property type="evidence" value="ECO:0007669"/>
    <property type="project" value="Ensembl"/>
</dbReference>
<dbReference type="GO" id="GO:0010613">
    <property type="term" value="P:positive regulation of cardiac muscle hypertrophy"/>
    <property type="evidence" value="ECO:0000314"/>
    <property type="project" value="BHF-UCL"/>
</dbReference>
<dbReference type="GO" id="GO:0070374">
    <property type="term" value="P:positive regulation of ERK1 and ERK2 cascade"/>
    <property type="evidence" value="ECO:0000315"/>
    <property type="project" value="BHF-UCL"/>
</dbReference>
<dbReference type="GO" id="GO:0010628">
    <property type="term" value="P:positive regulation of gene expression"/>
    <property type="evidence" value="ECO:0000315"/>
    <property type="project" value="BHF-UCL"/>
</dbReference>
<dbReference type="GO" id="GO:1900745">
    <property type="term" value="P:positive regulation of p38MAPK cascade"/>
    <property type="evidence" value="ECO:0000315"/>
    <property type="project" value="BHF-UCL"/>
</dbReference>
<dbReference type="GO" id="GO:2001262">
    <property type="term" value="P:positive regulation of semaphorin-plexin signaling pathway"/>
    <property type="evidence" value="ECO:0000250"/>
    <property type="project" value="BHF-UCL"/>
</dbReference>
<dbReference type="GO" id="GO:0045944">
    <property type="term" value="P:positive regulation of transcription by RNA polymerase II"/>
    <property type="evidence" value="ECO:0000314"/>
    <property type="project" value="UniProtKB"/>
</dbReference>
<dbReference type="GO" id="GO:2000679">
    <property type="term" value="P:positive regulation of transcription regulatory region DNA binding"/>
    <property type="evidence" value="ECO:0000314"/>
    <property type="project" value="BHF-UCL"/>
</dbReference>
<dbReference type="GO" id="GO:1903929">
    <property type="term" value="P:primary palate development"/>
    <property type="evidence" value="ECO:0007669"/>
    <property type="project" value="Ensembl"/>
</dbReference>
<dbReference type="GO" id="GO:0003266">
    <property type="term" value="P:regulation of secondary heart field cardioblast proliferation"/>
    <property type="evidence" value="ECO:0000250"/>
    <property type="project" value="BHF-UCL"/>
</dbReference>
<dbReference type="GO" id="GO:0034103">
    <property type="term" value="P:regulation of tissue remodeling"/>
    <property type="evidence" value="ECO:0000314"/>
    <property type="project" value="BHF-UCL"/>
</dbReference>
<dbReference type="GO" id="GO:0006357">
    <property type="term" value="P:regulation of transcription by RNA polymerase II"/>
    <property type="evidence" value="ECO:0000318"/>
    <property type="project" value="GO_Central"/>
</dbReference>
<dbReference type="GO" id="GO:0001967">
    <property type="term" value="P:suckling behavior"/>
    <property type="evidence" value="ECO:0007669"/>
    <property type="project" value="Ensembl"/>
</dbReference>
<dbReference type="GO" id="GO:0048485">
    <property type="term" value="P:sympathetic nervous system development"/>
    <property type="evidence" value="ECO:0007669"/>
    <property type="project" value="Ensembl"/>
</dbReference>
<dbReference type="GO" id="GO:0048538">
    <property type="term" value="P:thymus development"/>
    <property type="evidence" value="ECO:0000250"/>
    <property type="project" value="BHF-UCL"/>
</dbReference>
<dbReference type="GO" id="GO:0043586">
    <property type="term" value="P:tongue development"/>
    <property type="evidence" value="ECO:0007669"/>
    <property type="project" value="Ensembl"/>
</dbReference>
<dbReference type="GO" id="GO:0061032">
    <property type="term" value="P:visceral serous pericardium development"/>
    <property type="evidence" value="ECO:0007669"/>
    <property type="project" value="Ensembl"/>
</dbReference>
<dbReference type="CDD" id="cd11471">
    <property type="entry name" value="bHLH_TS_HAND2"/>
    <property type="match status" value="1"/>
</dbReference>
<dbReference type="FunFam" id="4.10.280.10:FF:000010">
    <property type="entry name" value="Scleraxis bHLH transcription factor"/>
    <property type="match status" value="1"/>
</dbReference>
<dbReference type="Gene3D" id="4.10.280.10">
    <property type="entry name" value="Helix-loop-helix DNA-binding domain"/>
    <property type="match status" value="1"/>
</dbReference>
<dbReference type="InterPro" id="IPR011598">
    <property type="entry name" value="bHLH_dom"/>
</dbReference>
<dbReference type="InterPro" id="IPR050283">
    <property type="entry name" value="E-box_TF_Regulators"/>
</dbReference>
<dbReference type="InterPro" id="IPR036638">
    <property type="entry name" value="HLH_DNA-bd_sf"/>
</dbReference>
<dbReference type="PANTHER" id="PTHR23349">
    <property type="entry name" value="BASIC HELIX-LOOP-HELIX TRANSCRIPTION FACTOR, TWIST"/>
    <property type="match status" value="1"/>
</dbReference>
<dbReference type="PANTHER" id="PTHR23349:SF41">
    <property type="entry name" value="HEART- AND NEURAL CREST DERIVATIVES-EXPRESSED PROTEIN 2"/>
    <property type="match status" value="1"/>
</dbReference>
<dbReference type="Pfam" id="PF00010">
    <property type="entry name" value="HLH"/>
    <property type="match status" value="1"/>
</dbReference>
<dbReference type="SMART" id="SM00353">
    <property type="entry name" value="HLH"/>
    <property type="match status" value="1"/>
</dbReference>
<dbReference type="SUPFAM" id="SSF47459">
    <property type="entry name" value="HLH, helix-loop-helix DNA-binding domain"/>
    <property type="match status" value="1"/>
</dbReference>
<dbReference type="PROSITE" id="PS50888">
    <property type="entry name" value="BHLH"/>
    <property type="match status" value="1"/>
</dbReference>
<accession>P61296</accession>
<accession>B6ECG9</accession>
<accession>O95300</accession>
<accession>O95301</accession>
<accession>P97833</accession>
<accession>Q494T1</accession>
<protein>
    <recommendedName>
        <fullName>Heart- and neural crest derivatives-expressed protein 2</fullName>
    </recommendedName>
    <alternativeName>
        <fullName>Class A basic helix-loop-helix protein 26</fullName>
        <shortName>bHLHa26</shortName>
    </alternativeName>
    <alternativeName>
        <fullName>Deciduum, heart, autonomic nervous system and neural crest derivatives-expressed protein 2</fullName>
        <shortName>dHAND</shortName>
    </alternativeName>
</protein>
<feature type="chain" id="PRO_0000127191" description="Heart- and neural crest derivatives-expressed protein 2">
    <location>
        <begin position="1"/>
        <end position="217"/>
    </location>
</feature>
<feature type="domain" description="bHLH" evidence="2">
    <location>
        <begin position="99"/>
        <end position="151"/>
    </location>
</feature>
<feature type="region of interest" description="Disordered" evidence="3">
    <location>
        <begin position="76"/>
        <end position="116"/>
    </location>
</feature>
<feature type="compositionally biased region" description="Gly residues" evidence="3">
    <location>
        <begin position="83"/>
        <end position="94"/>
    </location>
</feature>
<feature type="compositionally biased region" description="Basic residues" evidence="3">
    <location>
        <begin position="97"/>
        <end position="112"/>
    </location>
</feature>
<feature type="splice variant" id="VSP_056880" description="In isoform 2." evidence="4">
    <location>
        <begin position="21"/>
        <end position="26"/>
    </location>
</feature>
<feature type="splice variant" id="VSP_056881" description="In isoform 2." evidence="4">
    <location>
        <begin position="71"/>
        <end position="101"/>
    </location>
</feature>